<protein>
    <recommendedName>
        <fullName>UBA-like domain-containing protein 1</fullName>
    </recommendedName>
</protein>
<sequence length="177" mass="18954">MSVNMDELKHQVMINQFVLTAGCAADQAKQLLQAAHWQFETALSAFFQETNIPYSHHHHQMMCTPANTPATPPNFPDALTMFSRLKASESFHSGGSGSPMAATATSPPPHFPHAATSSSAASSWPTAASPPGGPQHHQPQPPLWTPTPPSPASDWPPLAPQQATSEPRAHPAMEAER</sequence>
<gene>
    <name type="primary">UBALD1</name>
    <name type="synonym">FAM100A</name>
    <name type="ORF">PP11303</name>
</gene>
<dbReference type="EMBL" id="AF447881">
    <property type="protein sequence ID" value="AAQ04656.1"/>
    <property type="molecule type" value="mRNA"/>
</dbReference>
<dbReference type="EMBL" id="AC023830">
    <property type="status" value="NOT_ANNOTATED_CDS"/>
    <property type="molecule type" value="Genomic_DNA"/>
</dbReference>
<dbReference type="EMBL" id="BC012018">
    <property type="protein sequence ID" value="AAH12018.1"/>
    <property type="molecule type" value="mRNA"/>
</dbReference>
<dbReference type="EMBL" id="BC025327">
    <property type="protein sequence ID" value="AAH25327.1"/>
    <property type="molecule type" value="mRNA"/>
</dbReference>
<dbReference type="EMBL" id="BC062534">
    <property type="protein sequence ID" value="AAH62534.1"/>
    <property type="molecule type" value="mRNA"/>
</dbReference>
<dbReference type="CCDS" id="CCDS10518.1">
    <molecule id="Q8TB05-1"/>
</dbReference>
<dbReference type="RefSeq" id="NP_001317396.1">
    <property type="nucleotide sequence ID" value="NM_001330467.1"/>
</dbReference>
<dbReference type="RefSeq" id="NP_660296.1">
    <molecule id="Q8TB05-1"/>
    <property type="nucleotide sequence ID" value="NM_145253.3"/>
</dbReference>
<dbReference type="SMR" id="Q8TB05"/>
<dbReference type="BioGRID" id="125862">
    <property type="interactions" value="1"/>
</dbReference>
<dbReference type="FunCoup" id="Q8TB05">
    <property type="interactions" value="101"/>
</dbReference>
<dbReference type="IntAct" id="Q8TB05">
    <property type="interactions" value="3"/>
</dbReference>
<dbReference type="STRING" id="9606.ENSP00000283474"/>
<dbReference type="GlyGen" id="Q8TB05">
    <property type="glycosylation" value="2 sites"/>
</dbReference>
<dbReference type="iPTMnet" id="Q8TB05"/>
<dbReference type="PhosphoSitePlus" id="Q8TB05"/>
<dbReference type="BioMuta" id="UBALD1"/>
<dbReference type="DMDM" id="74730413"/>
<dbReference type="jPOST" id="Q8TB05"/>
<dbReference type="MassIVE" id="Q8TB05"/>
<dbReference type="PaxDb" id="9606-ENSP00000283474"/>
<dbReference type="PeptideAtlas" id="Q8TB05"/>
<dbReference type="ProteomicsDB" id="73945">
    <molecule id="Q8TB05-1"/>
</dbReference>
<dbReference type="ProteomicsDB" id="73946">
    <molecule id="Q8TB05-2"/>
</dbReference>
<dbReference type="Pumba" id="Q8TB05"/>
<dbReference type="Antibodypedia" id="68119">
    <property type="antibodies" value="12 antibodies from 7 providers"/>
</dbReference>
<dbReference type="DNASU" id="124402"/>
<dbReference type="Ensembl" id="ENST00000283474.12">
    <molecule id="Q8TB05-1"/>
    <property type="protein sequence ID" value="ENSP00000283474.6"/>
    <property type="gene ID" value="ENSG00000153443.13"/>
</dbReference>
<dbReference type="Ensembl" id="ENST00000590891.1">
    <molecule id="Q8TB05-2"/>
    <property type="protein sequence ID" value="ENSP00000465706.1"/>
    <property type="gene ID" value="ENSG00000153443.13"/>
</dbReference>
<dbReference type="GeneID" id="124402"/>
<dbReference type="KEGG" id="hsa:124402"/>
<dbReference type="MANE-Select" id="ENST00000283474.12">
    <property type="protein sequence ID" value="ENSP00000283474.6"/>
    <property type="RefSeq nucleotide sequence ID" value="NM_145253.3"/>
    <property type="RefSeq protein sequence ID" value="NP_660296.1"/>
</dbReference>
<dbReference type="UCSC" id="uc002cwx.2">
    <molecule id="Q8TB05-1"/>
    <property type="organism name" value="human"/>
</dbReference>
<dbReference type="AGR" id="HGNC:29576"/>
<dbReference type="CTD" id="124402"/>
<dbReference type="DisGeNET" id="124402"/>
<dbReference type="GeneCards" id="UBALD1"/>
<dbReference type="HGNC" id="HGNC:29576">
    <property type="gene designation" value="UBALD1"/>
</dbReference>
<dbReference type="HPA" id="ENSG00000153443">
    <property type="expression patterns" value="Low tissue specificity"/>
</dbReference>
<dbReference type="neXtProt" id="NX_Q8TB05"/>
<dbReference type="OpenTargets" id="ENSG00000153443"/>
<dbReference type="PharmGKB" id="PA142671782"/>
<dbReference type="VEuPathDB" id="HostDB:ENSG00000153443"/>
<dbReference type="eggNOG" id="ENOG502S0GG">
    <property type="taxonomic scope" value="Eukaryota"/>
</dbReference>
<dbReference type="GeneTree" id="ENSGT00390000008825"/>
<dbReference type="HOGENOM" id="CLU_1299361_0_0_1"/>
<dbReference type="InParanoid" id="Q8TB05"/>
<dbReference type="OMA" id="SWGMTPP"/>
<dbReference type="OrthoDB" id="6093553at2759"/>
<dbReference type="PAN-GO" id="Q8TB05">
    <property type="GO annotations" value="0 GO annotations based on evolutionary models"/>
</dbReference>
<dbReference type="PhylomeDB" id="Q8TB05"/>
<dbReference type="TreeFam" id="TF329433"/>
<dbReference type="PathwayCommons" id="Q8TB05"/>
<dbReference type="SignaLink" id="Q8TB05"/>
<dbReference type="BioGRID-ORCS" id="124402">
    <property type="hits" value="68 hits in 1147 CRISPR screens"/>
</dbReference>
<dbReference type="ChiTaRS" id="UBALD1">
    <property type="organism name" value="human"/>
</dbReference>
<dbReference type="GenomeRNAi" id="124402"/>
<dbReference type="Pharos" id="Q8TB05">
    <property type="development level" value="Tdark"/>
</dbReference>
<dbReference type="PRO" id="PR:Q8TB05"/>
<dbReference type="Proteomes" id="UP000005640">
    <property type="component" value="Chromosome 16"/>
</dbReference>
<dbReference type="RNAct" id="Q8TB05">
    <property type="molecule type" value="protein"/>
</dbReference>
<dbReference type="Bgee" id="ENSG00000153443">
    <property type="expression patterns" value="Expressed in right hemisphere of cerebellum and 131 other cell types or tissues"/>
</dbReference>
<dbReference type="ExpressionAtlas" id="Q8TB05">
    <property type="expression patterns" value="baseline and differential"/>
</dbReference>
<dbReference type="CDD" id="cd14343">
    <property type="entry name" value="UBA_F100B_like"/>
    <property type="match status" value="1"/>
</dbReference>
<dbReference type="Gene3D" id="1.10.8.10">
    <property type="entry name" value="DNA helicase RuvA subunit, C-terminal domain"/>
    <property type="match status" value="1"/>
</dbReference>
<dbReference type="InterPro" id="IPR009060">
    <property type="entry name" value="UBA-like_sf"/>
</dbReference>
<dbReference type="InterPro" id="IPR054109">
    <property type="entry name" value="UBA_8"/>
</dbReference>
<dbReference type="InterPro" id="IPR039310">
    <property type="entry name" value="UBALD1/2"/>
</dbReference>
<dbReference type="PANTHER" id="PTHR31993:SF5">
    <property type="entry name" value="UBA-LIKE DOMAIN-CONTAINING PROTEIN 1"/>
    <property type="match status" value="1"/>
</dbReference>
<dbReference type="PANTHER" id="PTHR31993">
    <property type="entry name" value="UBA-LIKE DOMAIN-CONTAINING PROTEIN 2"/>
    <property type="match status" value="1"/>
</dbReference>
<dbReference type="Pfam" id="PF22566">
    <property type="entry name" value="UBA_8"/>
    <property type="match status" value="1"/>
</dbReference>
<dbReference type="SUPFAM" id="SSF46934">
    <property type="entry name" value="UBA-like"/>
    <property type="match status" value="1"/>
</dbReference>
<accession>Q8TB05</accession>
<accession>Q71MF6</accession>
<name>UBAD1_HUMAN</name>
<feature type="chain" id="PRO_0000236079" description="UBA-like domain-containing protein 1">
    <location>
        <begin position="1"/>
        <end position="177"/>
    </location>
</feature>
<feature type="region of interest" description="Disordered" evidence="1">
    <location>
        <begin position="89"/>
        <end position="177"/>
    </location>
</feature>
<feature type="compositionally biased region" description="Low complexity" evidence="1">
    <location>
        <begin position="112"/>
        <end position="138"/>
    </location>
</feature>
<feature type="compositionally biased region" description="Pro residues" evidence="1">
    <location>
        <begin position="139"/>
        <end position="151"/>
    </location>
</feature>
<feature type="compositionally biased region" description="Basic and acidic residues" evidence="1">
    <location>
        <begin position="167"/>
        <end position="177"/>
    </location>
</feature>
<feature type="splice variant" id="VSP_018573" description="In isoform 2." evidence="2">
    <original>MSVNMDELKHQVMINQFVLTAGCAADQAKQLLQAAHWQFETALSAFFQETNIPYSHHHHQM</original>
    <variation>MKLLTLQPPGMLWLMERGGLGKPRGPRHRGLLRVRLGRFISRLLLWEPLGGGQAWGSGEGTQSLPRMGQPRISPWEAVGAPPGRGAHPISPLFPSQ</variation>
    <location>
        <begin position="1"/>
        <end position="61"/>
    </location>
</feature>
<evidence type="ECO:0000256" key="1">
    <source>
        <dbReference type="SAM" id="MobiDB-lite"/>
    </source>
</evidence>
<evidence type="ECO:0000303" key="2">
    <source>
    </source>
</evidence>
<evidence type="ECO:0000305" key="3"/>
<keyword id="KW-0025">Alternative splicing</keyword>
<keyword id="KW-1267">Proteomics identification</keyword>
<keyword id="KW-1185">Reference proteome</keyword>
<proteinExistence type="evidence at protein level"/>
<comment type="interaction">
    <interactant intactId="EBI-725656">
        <id>Q8TB05</id>
    </interactant>
    <interactant intactId="EBI-13315321">
        <id>O95822-2</id>
        <label>MLYCD</label>
    </interactant>
    <organismsDiffer>false</organismsDiffer>
    <experiments>3</experiments>
</comment>
<comment type="alternative products">
    <event type="alternative splicing"/>
    <isoform>
        <id>Q8TB05-1</id>
        <name>1</name>
        <sequence type="displayed"/>
    </isoform>
    <isoform>
        <id>Q8TB05-2</id>
        <name>2</name>
        <sequence type="described" ref="VSP_018573"/>
    </isoform>
</comment>
<comment type="similarity">
    <text evidence="3">Belongs to the UBALD family.</text>
</comment>
<reference key="1">
    <citation type="journal article" date="2004" name="Proc. Natl. Acad. Sci. U.S.A.">
        <title>Large-scale cDNA transfection screening for genes related to cancer development and progression.</title>
        <authorList>
            <person name="Wan D."/>
            <person name="Gong Y."/>
            <person name="Qin W."/>
            <person name="Zhang P."/>
            <person name="Li J."/>
            <person name="Wei L."/>
            <person name="Zhou X."/>
            <person name="Li H."/>
            <person name="Qiu X."/>
            <person name="Zhong F."/>
            <person name="He L."/>
            <person name="Yu J."/>
            <person name="Yao G."/>
            <person name="Jiang H."/>
            <person name="Qian L."/>
            <person name="Yu Y."/>
            <person name="Shu H."/>
            <person name="Chen X."/>
            <person name="Xu H."/>
            <person name="Guo M."/>
            <person name="Pan Z."/>
            <person name="Chen Y."/>
            <person name="Ge C."/>
            <person name="Yang S."/>
            <person name="Gu J."/>
        </authorList>
    </citation>
    <scope>NUCLEOTIDE SEQUENCE [LARGE SCALE MRNA] (ISOFORM 2)</scope>
</reference>
<reference key="2">
    <citation type="journal article" date="2004" name="Nature">
        <title>The sequence and analysis of duplication-rich human chromosome 16.</title>
        <authorList>
            <person name="Martin J."/>
            <person name="Han C."/>
            <person name="Gordon L.A."/>
            <person name="Terry A."/>
            <person name="Prabhakar S."/>
            <person name="She X."/>
            <person name="Xie G."/>
            <person name="Hellsten U."/>
            <person name="Chan Y.M."/>
            <person name="Altherr M."/>
            <person name="Couronne O."/>
            <person name="Aerts A."/>
            <person name="Bajorek E."/>
            <person name="Black S."/>
            <person name="Blumer H."/>
            <person name="Branscomb E."/>
            <person name="Brown N.C."/>
            <person name="Bruno W.J."/>
            <person name="Buckingham J.M."/>
            <person name="Callen D.F."/>
            <person name="Campbell C.S."/>
            <person name="Campbell M.L."/>
            <person name="Campbell E.W."/>
            <person name="Caoile C."/>
            <person name="Challacombe J.F."/>
            <person name="Chasteen L.A."/>
            <person name="Chertkov O."/>
            <person name="Chi H.C."/>
            <person name="Christensen M."/>
            <person name="Clark L.M."/>
            <person name="Cohn J.D."/>
            <person name="Denys M."/>
            <person name="Detter J.C."/>
            <person name="Dickson M."/>
            <person name="Dimitrijevic-Bussod M."/>
            <person name="Escobar J."/>
            <person name="Fawcett J.J."/>
            <person name="Flowers D."/>
            <person name="Fotopulos D."/>
            <person name="Glavina T."/>
            <person name="Gomez M."/>
            <person name="Gonzales E."/>
            <person name="Goodstein D."/>
            <person name="Goodwin L.A."/>
            <person name="Grady D.L."/>
            <person name="Grigoriev I."/>
            <person name="Groza M."/>
            <person name="Hammon N."/>
            <person name="Hawkins T."/>
            <person name="Haydu L."/>
            <person name="Hildebrand C.E."/>
            <person name="Huang W."/>
            <person name="Israni S."/>
            <person name="Jett J."/>
            <person name="Jewett P.B."/>
            <person name="Kadner K."/>
            <person name="Kimball H."/>
            <person name="Kobayashi A."/>
            <person name="Krawczyk M.-C."/>
            <person name="Leyba T."/>
            <person name="Longmire J.L."/>
            <person name="Lopez F."/>
            <person name="Lou Y."/>
            <person name="Lowry S."/>
            <person name="Ludeman T."/>
            <person name="Manohar C.F."/>
            <person name="Mark G.A."/>
            <person name="McMurray K.L."/>
            <person name="Meincke L.J."/>
            <person name="Morgan J."/>
            <person name="Moyzis R.K."/>
            <person name="Mundt M.O."/>
            <person name="Munk A.C."/>
            <person name="Nandkeshwar R.D."/>
            <person name="Pitluck S."/>
            <person name="Pollard M."/>
            <person name="Predki P."/>
            <person name="Parson-Quintana B."/>
            <person name="Ramirez L."/>
            <person name="Rash S."/>
            <person name="Retterer J."/>
            <person name="Ricke D.O."/>
            <person name="Robinson D.L."/>
            <person name="Rodriguez A."/>
            <person name="Salamov A."/>
            <person name="Saunders E.H."/>
            <person name="Scott D."/>
            <person name="Shough T."/>
            <person name="Stallings R.L."/>
            <person name="Stalvey M."/>
            <person name="Sutherland R.D."/>
            <person name="Tapia R."/>
            <person name="Tesmer J.G."/>
            <person name="Thayer N."/>
            <person name="Thompson L.S."/>
            <person name="Tice H."/>
            <person name="Torney D.C."/>
            <person name="Tran-Gyamfi M."/>
            <person name="Tsai M."/>
            <person name="Ulanovsky L.E."/>
            <person name="Ustaszewska A."/>
            <person name="Vo N."/>
            <person name="White P.S."/>
            <person name="Williams A.L."/>
            <person name="Wills P.L."/>
            <person name="Wu J.-R."/>
            <person name="Wu K."/>
            <person name="Yang J."/>
            <person name="DeJong P."/>
            <person name="Bruce D."/>
            <person name="Doggett N.A."/>
            <person name="Deaven L."/>
            <person name="Schmutz J."/>
            <person name="Grimwood J."/>
            <person name="Richardson P."/>
            <person name="Rokhsar D.S."/>
            <person name="Eichler E.E."/>
            <person name="Gilna P."/>
            <person name="Lucas S.M."/>
            <person name="Myers R.M."/>
            <person name="Rubin E.M."/>
            <person name="Pennacchio L.A."/>
        </authorList>
    </citation>
    <scope>NUCLEOTIDE SEQUENCE [LARGE SCALE GENOMIC DNA]</scope>
</reference>
<reference key="3">
    <citation type="journal article" date="2004" name="Genome Res.">
        <title>The status, quality, and expansion of the NIH full-length cDNA project: the Mammalian Gene Collection (MGC).</title>
        <authorList>
            <consortium name="The MGC Project Team"/>
        </authorList>
    </citation>
    <scope>NUCLEOTIDE SEQUENCE [LARGE SCALE MRNA] (ISOFORM 1)</scope>
    <source>
        <tissue>Cervix adenocarcinoma</tissue>
        <tissue>Lung</tissue>
        <tissue>Melanoma</tissue>
    </source>
</reference>
<organism>
    <name type="scientific">Homo sapiens</name>
    <name type="common">Human</name>
    <dbReference type="NCBI Taxonomy" id="9606"/>
    <lineage>
        <taxon>Eukaryota</taxon>
        <taxon>Metazoa</taxon>
        <taxon>Chordata</taxon>
        <taxon>Craniata</taxon>
        <taxon>Vertebrata</taxon>
        <taxon>Euteleostomi</taxon>
        <taxon>Mammalia</taxon>
        <taxon>Eutheria</taxon>
        <taxon>Euarchontoglires</taxon>
        <taxon>Primates</taxon>
        <taxon>Haplorrhini</taxon>
        <taxon>Catarrhini</taxon>
        <taxon>Hominidae</taxon>
        <taxon>Homo</taxon>
    </lineage>
</organism>